<reference key="1">
    <citation type="journal article" date="2001" name="Nature">
        <title>Genome sequence of enterohaemorrhagic Escherichia coli O157:H7.</title>
        <authorList>
            <person name="Perna N.T."/>
            <person name="Plunkett G. III"/>
            <person name="Burland V."/>
            <person name="Mau B."/>
            <person name="Glasner J.D."/>
            <person name="Rose D.J."/>
            <person name="Mayhew G.F."/>
            <person name="Evans P.S."/>
            <person name="Gregor J."/>
            <person name="Kirkpatrick H.A."/>
            <person name="Posfai G."/>
            <person name="Hackett J."/>
            <person name="Klink S."/>
            <person name="Boutin A."/>
            <person name="Shao Y."/>
            <person name="Miller L."/>
            <person name="Grotbeck E.J."/>
            <person name="Davis N.W."/>
            <person name="Lim A."/>
            <person name="Dimalanta E.T."/>
            <person name="Potamousis K."/>
            <person name="Apodaca J."/>
            <person name="Anantharaman T.S."/>
            <person name="Lin J."/>
            <person name="Yen G."/>
            <person name="Schwartz D.C."/>
            <person name="Welch R.A."/>
            <person name="Blattner F.R."/>
        </authorList>
    </citation>
    <scope>NUCLEOTIDE SEQUENCE [LARGE SCALE GENOMIC DNA]</scope>
    <source>
        <strain>O157:H7 / EDL933 / ATCC 700927 / EHEC</strain>
    </source>
</reference>
<reference key="2">
    <citation type="journal article" date="2001" name="DNA Res.">
        <title>Complete genome sequence of enterohemorrhagic Escherichia coli O157:H7 and genomic comparison with a laboratory strain K-12.</title>
        <authorList>
            <person name="Hayashi T."/>
            <person name="Makino K."/>
            <person name="Ohnishi M."/>
            <person name="Kurokawa K."/>
            <person name="Ishii K."/>
            <person name="Yokoyama K."/>
            <person name="Han C.-G."/>
            <person name="Ohtsubo E."/>
            <person name="Nakayama K."/>
            <person name="Murata T."/>
            <person name="Tanaka M."/>
            <person name="Tobe T."/>
            <person name="Iida T."/>
            <person name="Takami H."/>
            <person name="Honda T."/>
            <person name="Sasakawa C."/>
            <person name="Ogasawara N."/>
            <person name="Yasunaga T."/>
            <person name="Kuhara S."/>
            <person name="Shiba T."/>
            <person name="Hattori M."/>
            <person name="Shinagawa H."/>
        </authorList>
    </citation>
    <scope>NUCLEOTIDE SEQUENCE [LARGE SCALE GENOMIC DNA]</scope>
    <source>
        <strain>O157:H7 / Sakai / RIMD 0509952 / EHEC</strain>
    </source>
</reference>
<keyword id="KW-1003">Cell membrane</keyword>
<keyword id="KW-0472">Membrane</keyword>
<keyword id="KW-1185">Reference proteome</keyword>
<keyword id="KW-0812">Transmembrane</keyword>
<keyword id="KW-1133">Transmembrane helix</keyword>
<name>YGGT_ECO57</name>
<proteinExistence type="inferred from homology"/>
<protein>
    <recommendedName>
        <fullName>Uncharacterized protein YggT</fullName>
    </recommendedName>
</protein>
<evidence type="ECO:0000255" key="1"/>
<evidence type="ECO:0000305" key="2"/>
<organism>
    <name type="scientific">Escherichia coli O157:H7</name>
    <dbReference type="NCBI Taxonomy" id="83334"/>
    <lineage>
        <taxon>Bacteria</taxon>
        <taxon>Pseudomonadati</taxon>
        <taxon>Pseudomonadota</taxon>
        <taxon>Gammaproteobacteria</taxon>
        <taxon>Enterobacterales</taxon>
        <taxon>Enterobacteriaceae</taxon>
        <taxon>Escherichia</taxon>
    </lineage>
</organism>
<feature type="chain" id="PRO_0000169376" description="Uncharacterized protein YggT">
    <location>
        <begin position="1"/>
        <end position="188"/>
    </location>
</feature>
<feature type="transmembrane region" description="Helical" evidence="1">
    <location>
        <begin position="1"/>
        <end position="21"/>
    </location>
</feature>
<feature type="transmembrane region" description="Helical" evidence="1">
    <location>
        <begin position="67"/>
        <end position="87"/>
    </location>
</feature>
<feature type="transmembrane region" description="Helical" evidence="1">
    <location>
        <begin position="89"/>
        <end position="109"/>
    </location>
</feature>
<feature type="transmembrane region" description="Helical" evidence="1">
    <location>
        <begin position="145"/>
        <end position="165"/>
    </location>
</feature>
<feature type="transmembrane region" description="Helical" evidence="1">
    <location>
        <begin position="168"/>
        <end position="188"/>
    </location>
</feature>
<comment type="subcellular location">
    <subcellularLocation>
        <location evidence="2">Cell membrane</location>
        <topology evidence="2">Multi-pass membrane protein</topology>
    </subcellularLocation>
</comment>
<comment type="similarity">
    <text evidence="2">Belongs to the YggT family.</text>
</comment>
<dbReference type="EMBL" id="AE005174">
    <property type="protein sequence ID" value="AAG58083.1"/>
    <property type="molecule type" value="Genomic_DNA"/>
</dbReference>
<dbReference type="EMBL" id="BA000007">
    <property type="protein sequence ID" value="BAB37251.1"/>
    <property type="molecule type" value="Genomic_DNA"/>
</dbReference>
<dbReference type="PIR" id="D91107">
    <property type="entry name" value="D91107"/>
</dbReference>
<dbReference type="PIR" id="G85952">
    <property type="entry name" value="G85952"/>
</dbReference>
<dbReference type="RefSeq" id="NP_311855.1">
    <property type="nucleotide sequence ID" value="NC_002695.1"/>
</dbReference>
<dbReference type="RefSeq" id="WP_001094831.1">
    <property type="nucleotide sequence ID" value="NZ_VOAI01000003.1"/>
</dbReference>
<dbReference type="STRING" id="155864.Z4297"/>
<dbReference type="GeneID" id="916342"/>
<dbReference type="GeneID" id="93779045"/>
<dbReference type="KEGG" id="ece:Z4297"/>
<dbReference type="KEGG" id="ecs:ECs_3828"/>
<dbReference type="PATRIC" id="fig|386585.9.peg.3994"/>
<dbReference type="eggNOG" id="COG0762">
    <property type="taxonomic scope" value="Bacteria"/>
</dbReference>
<dbReference type="HOGENOM" id="CLU_089905_1_0_6"/>
<dbReference type="OMA" id="MIDFSPM"/>
<dbReference type="Proteomes" id="UP000000558">
    <property type="component" value="Chromosome"/>
</dbReference>
<dbReference type="Proteomes" id="UP000002519">
    <property type="component" value="Chromosome"/>
</dbReference>
<dbReference type="GO" id="GO:0005886">
    <property type="term" value="C:plasma membrane"/>
    <property type="evidence" value="ECO:0007669"/>
    <property type="project" value="UniProtKB-SubCell"/>
</dbReference>
<dbReference type="InterPro" id="IPR003425">
    <property type="entry name" value="CCB3/YggT"/>
</dbReference>
<dbReference type="PANTHER" id="PTHR33219:SF14">
    <property type="entry name" value="PROTEIN COFACTOR ASSEMBLY OF COMPLEX C SUBUNIT B CCB3, CHLOROPLASTIC-RELATED"/>
    <property type="match status" value="1"/>
</dbReference>
<dbReference type="PANTHER" id="PTHR33219">
    <property type="entry name" value="YLMG HOMOLOG PROTEIN 2, CHLOROPLASTIC"/>
    <property type="match status" value="1"/>
</dbReference>
<dbReference type="Pfam" id="PF02325">
    <property type="entry name" value="YGGT"/>
    <property type="match status" value="2"/>
</dbReference>
<gene>
    <name type="primary">yggT</name>
    <name type="ordered locus">Z4297</name>
    <name type="ordered locus">ECs3828</name>
</gene>
<accession>P64566</accession>
<accession>P52058</accession>
<sequence>MNTLTFLLSTVIELYTMVLLLRIWMQWAHCDFYNPFSQFVVKVTQPIIGPLRRVIPAMGPIDSASLLVAYILSFIKAIVLFKVVTFLPIIWIAGLLILLKTIGLLIFWVLLVMAIMSWVSQGRSPIEYVLIQLADPLLRPIRRLLPAMGGIDFSPMILVLLLYVINMGVAEVLQATGNMLLPGLWMAL</sequence>